<comment type="function">
    <text evidence="4 5 8 9 11">Forms a complex with OPG162 and OPG190 to coordinate the incorporation of OPG164 into wrapped enveloped virion (EV) membranes and, subsequently, the production of actin tails (PubMed:11119600, PubMed:23255618, PubMed:31941777). Therefore plays an essential role in efficient cell-to-cell spread of viral particles.</text>
</comment>
<comment type="subunit">
    <text evidence="3 6 7 8 9">Homodimer, disulfide-linked. Interacts with protein OPG190 (PubMed:23255618, PubMed:31941777). Interacts (via C-terminus) with protein OPG164 (PubMed:10074134). Interacts with OPG162 (PubMed:31941777).</text>
</comment>
<comment type="interaction">
    <interactant intactId="EBI-7133633">
        <id>P68617</id>
    </interactant>
    <interactant intactId="EBI-7736497">
        <id>P04021</id>
        <label>OPG057</label>
    </interactant>
    <organismsDiffer>false</organismsDiffer>
    <experiments>2</experiments>
</comment>
<comment type="interaction">
    <interactant intactId="EBI-7133633">
        <id>P68617</id>
    </interactant>
    <interactant intactId="EBI-7133540">
        <id>P68619</id>
        <label>OPG164</label>
    </interactant>
    <organismsDiffer>false</organismsDiffer>
    <experiments>7</experiments>
</comment>
<comment type="subcellular location">
    <subcellularLocation>
        <location evidence="12">Virion membrane</location>
        <topology evidence="12">Single-pass type II membrane protein</topology>
    </subcellularLocation>
    <subcellularLocation>
        <location evidence="12">Host membrane</location>
        <topology evidence="12">Single-pass type II membrane protein</topology>
    </subcellularLocation>
    <text evidence="10">Component of the enveloped virion (EV) membrane.</text>
</comment>
<comment type="similarity">
    <text evidence="12">Belongs to the orthopoxvirus OPG161 family.</text>
</comment>
<organismHost>
    <name type="scientific">Bos taurus</name>
    <name type="common">Bovine</name>
    <dbReference type="NCBI Taxonomy" id="9913"/>
</organismHost>
<accession>P68617</accession>
<accession>P21056</accession>
<accession>Q76ZP3</accession>
<organism>
    <name type="scientific">Vaccinia virus (strain Western Reserve)</name>
    <name type="common">VACV</name>
    <name type="synonym">Vaccinia virus (strain WR)</name>
    <dbReference type="NCBI Taxonomy" id="10254"/>
    <lineage>
        <taxon>Viruses</taxon>
        <taxon>Varidnaviria</taxon>
        <taxon>Bamfordvirae</taxon>
        <taxon>Nucleocytoviricota</taxon>
        <taxon>Pokkesviricetes</taxon>
        <taxon>Chitovirales</taxon>
        <taxon>Poxviridae</taxon>
        <taxon>Chordopoxvirinae</taxon>
        <taxon>Orthopoxvirus</taxon>
        <taxon>Vaccinia virus</taxon>
    </lineage>
</organism>
<proteinExistence type="evidence at protein level"/>
<sequence length="185" mass="20506">MMTPENDEEQTSVFSATVYGDKIQGKNKRKRVIGLCIRISMVISLLSMITMSAFLIVRLNQCMSANEAAITDAAVAVAAASSTHRKVASSTTQYDHKESCNGLYYQGSCYILHSDYQLFSDAKANCTAESSTLPNKSDVLITWLIDYVEDTWGSDGNPITKTTSDYQDSDVSQEVRKYFCVKTMN</sequence>
<name>PG161_VACCW</name>
<feature type="chain" id="PRO_0000099317" description="Protein OPG161">
    <location>
        <begin position="1"/>
        <end position="185"/>
    </location>
</feature>
<feature type="topological domain" description="Intravirion" evidence="1">
    <location>
        <begin position="1"/>
        <end position="33"/>
    </location>
</feature>
<feature type="transmembrane region" description="Helical" evidence="2">
    <location>
        <begin position="34"/>
        <end position="56"/>
    </location>
</feature>
<feature type="topological domain" description="Virion surface" evidence="1">
    <location>
        <begin position="57"/>
        <end position="185"/>
    </location>
</feature>
<feature type="region of interest" description="C-type lectin-like domain">
    <location>
        <begin position="98"/>
        <end position="185"/>
    </location>
</feature>
<feature type="glycosylation site" description="N-linked (GlcNAc...) asparagine; by host" evidence="2">
    <location>
        <position position="125"/>
    </location>
</feature>
<feature type="glycosylation site" description="N-linked (GlcNAc...) asparagine; by host" evidence="2">
    <location>
        <position position="135"/>
    </location>
</feature>
<feature type="disulfide bond" description="Interchain">
    <location>
        <position position="62"/>
    </location>
</feature>
<feature type="strand" evidence="13">
    <location>
        <begin position="101"/>
        <end position="105"/>
    </location>
</feature>
<feature type="strand" evidence="13">
    <location>
        <begin position="108"/>
        <end position="117"/>
    </location>
</feature>
<feature type="helix" evidence="13">
    <location>
        <begin position="119"/>
        <end position="128"/>
    </location>
</feature>
<feature type="helix" evidence="13">
    <location>
        <begin position="136"/>
        <end position="139"/>
    </location>
</feature>
<feature type="helix" evidence="13">
    <location>
        <begin position="145"/>
        <end position="148"/>
    </location>
</feature>
<feature type="strand" evidence="13">
    <location>
        <begin position="156"/>
        <end position="159"/>
    </location>
</feature>
<feature type="strand" evidence="13">
    <location>
        <begin position="176"/>
        <end position="183"/>
    </location>
</feature>
<protein>
    <recommendedName>
        <fullName>Protein OPG161</fullName>
    </recommendedName>
</protein>
<dbReference type="EMBL" id="D11079">
    <property type="protein sequence ID" value="BAA01805.1"/>
    <property type="molecule type" value="Genomic_DNA"/>
</dbReference>
<dbReference type="EMBL" id="M61187">
    <property type="protein sequence ID" value="AAA48330.1"/>
    <property type="molecule type" value="Genomic_DNA"/>
</dbReference>
<dbReference type="EMBL" id="X57318">
    <property type="protein sequence ID" value="CAA40583.1"/>
    <property type="molecule type" value="Genomic_DNA"/>
</dbReference>
<dbReference type="EMBL" id="AY243312">
    <property type="protein sequence ID" value="AAO89435.1"/>
    <property type="molecule type" value="Genomic_DNA"/>
</dbReference>
<dbReference type="PIR" id="H42520">
    <property type="entry name" value="H42520"/>
</dbReference>
<dbReference type="RefSeq" id="YP_233038.1">
    <property type="nucleotide sequence ID" value="NC_006998.1"/>
</dbReference>
<dbReference type="PDB" id="3K7B">
    <property type="method" value="X-ray"/>
    <property type="resolution" value="2.10 A"/>
    <property type="chains" value="A/B=90-185"/>
</dbReference>
<dbReference type="PDBsum" id="3K7B"/>
<dbReference type="SMR" id="P68617"/>
<dbReference type="IntAct" id="P68617">
    <property type="interactions" value="4"/>
</dbReference>
<dbReference type="MINT" id="P68617"/>
<dbReference type="ABCD" id="P68617">
    <property type="antibodies" value="9 sequenced antibodies"/>
</dbReference>
<dbReference type="DNASU" id="3707686"/>
<dbReference type="GeneID" id="3707686"/>
<dbReference type="KEGG" id="vg:3707686"/>
<dbReference type="EvolutionaryTrace" id="P68617"/>
<dbReference type="Proteomes" id="UP000000344">
    <property type="component" value="Genome"/>
</dbReference>
<dbReference type="GO" id="GO:0033644">
    <property type="term" value="C:host cell membrane"/>
    <property type="evidence" value="ECO:0007669"/>
    <property type="project" value="UniProtKB-SubCell"/>
</dbReference>
<dbReference type="GO" id="GO:0016020">
    <property type="term" value="C:membrane"/>
    <property type="evidence" value="ECO:0007669"/>
    <property type="project" value="UniProtKB-KW"/>
</dbReference>
<dbReference type="GO" id="GO:0019031">
    <property type="term" value="C:viral envelope"/>
    <property type="evidence" value="ECO:0007669"/>
    <property type="project" value="UniProtKB-KW"/>
</dbReference>
<dbReference type="GO" id="GO:0055036">
    <property type="term" value="C:virion membrane"/>
    <property type="evidence" value="ECO:0007669"/>
    <property type="project" value="UniProtKB-SubCell"/>
</dbReference>
<dbReference type="Gene3D" id="3.10.100.10">
    <property type="entry name" value="Mannose-Binding Protein A, subunit A"/>
    <property type="match status" value="1"/>
</dbReference>
<dbReference type="InterPro" id="IPR016186">
    <property type="entry name" value="C-type_lectin-like/link_sf"/>
</dbReference>
<dbReference type="InterPro" id="IPR009238">
    <property type="entry name" value="Chordopox_A33R"/>
</dbReference>
<dbReference type="Pfam" id="PF05966">
    <property type="entry name" value="Chordopox_A33R"/>
    <property type="match status" value="1"/>
</dbReference>
<evidence type="ECO:0000250" key="1"/>
<evidence type="ECO:0000255" key="2"/>
<evidence type="ECO:0000269" key="3">
    <source>
    </source>
</evidence>
<evidence type="ECO:0000269" key="4">
    <source>
    </source>
</evidence>
<evidence type="ECO:0000269" key="5">
    <source>
    </source>
</evidence>
<evidence type="ECO:0000269" key="6">
    <source>
    </source>
</evidence>
<evidence type="ECO:0000269" key="7">
    <source>
    </source>
</evidence>
<evidence type="ECO:0000269" key="8">
    <source>
    </source>
</evidence>
<evidence type="ECO:0000269" key="9">
    <source>
    </source>
</evidence>
<evidence type="ECO:0000269" key="10">
    <source>
    </source>
</evidence>
<evidence type="ECO:0000269" key="11">
    <source>
    </source>
</evidence>
<evidence type="ECO:0000305" key="12"/>
<evidence type="ECO:0007829" key="13">
    <source>
        <dbReference type="PDB" id="3K7B"/>
    </source>
</evidence>
<keyword id="KW-0002">3D-structure</keyword>
<keyword id="KW-1015">Disulfide bond</keyword>
<keyword id="KW-0325">Glycoprotein</keyword>
<keyword id="KW-1043">Host membrane</keyword>
<keyword id="KW-0472">Membrane</keyword>
<keyword id="KW-1185">Reference proteome</keyword>
<keyword id="KW-0735">Signal-anchor</keyword>
<keyword id="KW-0812">Transmembrane</keyword>
<keyword id="KW-1133">Transmembrane helix</keyword>
<keyword id="KW-0261">Viral envelope protein</keyword>
<keyword id="KW-0946">Virion</keyword>
<gene>
    <name type="primary">OPG161</name>
    <name type="ordered locus">VACWR156</name>
    <name type="ORF">A33R</name>
</gene>
<reference key="1">
    <citation type="journal article" date="1991" name="J. Gen. Virol.">
        <title>Nucleotide sequence of 42 kbp of vaccinia virus strain WR from near the right inverted terminal repeat.</title>
        <authorList>
            <person name="Smith G.L."/>
            <person name="Chan Y.S."/>
            <person name="Howard S.T."/>
        </authorList>
    </citation>
    <scope>NUCLEOTIDE SEQUENCE [GENOMIC DNA]</scope>
</reference>
<reference key="2">
    <citation type="journal article" date="1991" name="J. Biol. Chem.">
        <title>Identification, sequence, and expression of the gene encoding a Mr 35,000 subunit of the vaccinia virus DNA-dependent RNA polymerase.</title>
        <authorList>
            <person name="Amegadzie B.Y."/>
            <person name="Ahn B.-Y."/>
            <person name="Moss B."/>
        </authorList>
    </citation>
    <scope>NUCLEOTIDE SEQUENCE [GENOMIC DNA]</scope>
</reference>
<reference key="3">
    <citation type="submission" date="2003-02" db="EMBL/GenBank/DDBJ databases">
        <title>Sequencing of the coding region of Vaccinia-WR to an average 9-fold redundancy and an error rate of 0.16/10kb.</title>
        <authorList>
            <person name="Esposito J.J."/>
            <person name="Frace A.M."/>
            <person name="Sammons S.A."/>
            <person name="Olsen-Rasmussen M."/>
            <person name="Osborne J."/>
            <person name="Wohlhueter R."/>
        </authorList>
    </citation>
    <scope>NUCLEOTIDE SEQUENCE [LARGE SCALE GENOMIC DNA]</scope>
</reference>
<reference key="4">
    <citation type="journal article" date="1996" name="J. Virol.">
        <title>Extracellular vaccinia virus envelope glycoprotein encoded by the A33R gene.</title>
        <authorList>
            <person name="Roper R.L."/>
            <person name="Payne L.G."/>
            <person name="Moss B."/>
        </authorList>
    </citation>
    <scope>SUBCELLULAR LOCATION</scope>
</reference>
<reference key="5">
    <citation type="journal article" date="1998" name="J. Virol.">
        <title>The envelope protein encoded by the A33R gene is required for formation of actin-containing microvilli and efficient cell-to-cell spread of vaccinia virus.</title>
        <authorList>
            <person name="Roper R.L."/>
            <person name="Wolffe E.J."/>
            <person name="Weisberg A."/>
            <person name="Moss B."/>
        </authorList>
    </citation>
    <scope>FUNCTION</scope>
</reference>
<reference key="6">
    <citation type="journal article" date="1999" name="J. Virol.">
        <title>Interactions between vaccinia virus IEV membrane proteins and their roles in IEV assembly and actin tail formation.</title>
        <authorList>
            <person name="Rottger S."/>
            <person name="Frischknecht F."/>
            <person name="Reckmann I."/>
            <person name="Smith G.L."/>
            <person name="Way M."/>
        </authorList>
    </citation>
    <scope>INTERACTION WITH PROTEIN OPG164</scope>
</reference>
<reference key="7">
    <citation type="journal article" date="2001" name="J. Virol.">
        <title>The vaccinia virus A33R protein provides a chaperone function for viral membrane localization and tyrosine phosphorylation of the A36R protein.</title>
        <authorList>
            <person name="Wolffe E.J."/>
            <person name="Weisberg A.S."/>
            <person name="Moss B."/>
        </authorList>
    </citation>
    <scope>FUNCTION</scope>
</reference>
<reference key="8">
    <citation type="journal article" date="2003" name="J. Virol.">
        <title>Mutations in the vaccinia virus A33R and B5R envelope proteins that enhance release of extracellular virions and eliminate formation of actin-containing microvilli without preventing tyrosine phosphorylation of the A36R protein.</title>
        <authorList>
            <person name="Katz E."/>
            <person name="Ward B.M."/>
            <person name="Weisberg A.S."/>
            <person name="Moss B."/>
        </authorList>
    </citation>
    <scope>FUNCTION</scope>
</reference>
<reference key="9">
    <citation type="journal article" date="2006" name="J. Virol.">
        <title>Interaction between vaccinia virus extracellular virus envelope A33 and B5 glycoproteins.</title>
        <authorList>
            <person name="Perdiguero B."/>
            <person name="Blasco R."/>
        </authorList>
    </citation>
    <scope>INTERACTION WITH OPG190</scope>
</reference>
<reference key="10">
    <citation type="journal article" date="2006" name="Virol. J.">
        <title>Pox proteomics: mass spectrometry analysis and identification of Vaccinia virion proteins.</title>
        <authorList>
            <person name="Yoder J.D."/>
            <person name="Chen T.S."/>
            <person name="Gagnier C.R."/>
            <person name="Vemulapalli S."/>
            <person name="Maier C.S."/>
            <person name="Hruby D.E."/>
        </authorList>
    </citation>
    <scope>IDENTIFICATION BY MASS SPECTROMETRY</scope>
</reference>
<reference key="11">
    <citation type="journal article" date="2010" name="Virology">
        <title>The inability of vaccinia virus A33R protein to form intermolecular disulfide-bonded homodimers does not affect the production of infectious extracellular virus.</title>
        <authorList>
            <person name="Chan W.M."/>
            <person name="Kalkanoglu A.E."/>
            <person name="Ward B.M."/>
        </authorList>
    </citation>
    <scope>SUBUNIT</scope>
</reference>
<reference key="12">
    <citation type="journal article" date="2010" name="Virus Res.">
        <title>Protein A33 responsible for antibody-resistant spread of Vaccinia virus is homologous to C-type lectin-like proteins.</title>
        <authorList>
            <person name="Krupovic M."/>
            <person name="Cvirkaite-Krupovic V."/>
            <person name="Bamford D.H."/>
        </authorList>
    </citation>
    <scope>DOMAIN</scope>
</reference>
<reference key="13">
    <citation type="journal article" date="2013" name="J. Gen. Virol.">
        <title>Transport and stability of the vaccinia virus A34 protein is affected by the A33 protein.</title>
        <authorList>
            <person name="Breiman A."/>
            <person name="Carpentier D.C.J."/>
            <person name="Ewles H.A."/>
            <person name="Smith G.L."/>
        </authorList>
    </citation>
    <scope>FUNCTION</scope>
    <scope>INTERACTION WITH OPG190</scope>
</reference>
<reference key="14">
    <citation type="journal article" date="2020" name="J. Virol.">
        <title>Vaccinia Virus Glycoproteins A33, A34, and B5 Form a Complex for Efficient Endoplasmic Reticulum to trans-Golgi Network Transport.</title>
        <authorList>
            <person name="Monticelli S.R."/>
            <person name="Earley A.K."/>
            <person name="Stone R."/>
            <person name="Norbury C.C."/>
            <person name="Ward B.M."/>
        </authorList>
    </citation>
    <scope>FUNCTION</scope>
    <scope>INTERACTION WITH OPG162 AND OPG190</scope>
</reference>
<reference key="15">
    <citation type="journal article" date="2010" name="J. Virol.">
        <title>The structure of the poxvirus A33 protein reveals a dimer of unique C-type lectin-like domains.</title>
        <authorList>
            <person name="Su H.P."/>
            <person name="Singh K."/>
            <person name="Gittis A.G."/>
            <person name="Garboczi D.N."/>
        </authorList>
    </citation>
    <scope>X-RAY CRYSTALLOGRAPHY (2.1 ANGSTROMS) OF 90-185</scope>
</reference>